<evidence type="ECO:0000255" key="1">
    <source>
        <dbReference type="HAMAP-Rule" id="MF_01358"/>
    </source>
</evidence>
<organism>
    <name type="scientific">Nicotiana tabacum</name>
    <name type="common">Common tobacco</name>
    <dbReference type="NCBI Taxonomy" id="4097"/>
    <lineage>
        <taxon>Eukaryota</taxon>
        <taxon>Viridiplantae</taxon>
        <taxon>Streptophyta</taxon>
        <taxon>Embryophyta</taxon>
        <taxon>Tracheophyta</taxon>
        <taxon>Spermatophyta</taxon>
        <taxon>Magnoliopsida</taxon>
        <taxon>eudicotyledons</taxon>
        <taxon>Gunneridae</taxon>
        <taxon>Pentapetalae</taxon>
        <taxon>asterids</taxon>
        <taxon>lamiids</taxon>
        <taxon>Solanales</taxon>
        <taxon>Solanaceae</taxon>
        <taxon>Nicotianoideae</taxon>
        <taxon>Nicotianeae</taxon>
        <taxon>Nicotiana</taxon>
    </lineage>
</organism>
<accession>P12133</accession>
<reference key="1">
    <citation type="journal article" date="1986" name="EMBO J.">
        <title>The complete nucleotide sequence of the tobacco chloroplast genome: its gene organization and expression.</title>
        <authorList>
            <person name="Shinozaki K."/>
            <person name="Ohme M."/>
            <person name="Tanaka M."/>
            <person name="Wakasugi T."/>
            <person name="Hayashida N."/>
            <person name="Matsubayashi T."/>
            <person name="Zaita N."/>
            <person name="Chunwongse J."/>
            <person name="Obokata J."/>
            <person name="Yamaguchi-Shinozaki K."/>
            <person name="Ohto C."/>
            <person name="Torazawa K."/>
            <person name="Meng B.-Y."/>
            <person name="Sugita M."/>
            <person name="Deno H."/>
            <person name="Kamogashira T."/>
            <person name="Yamada K."/>
            <person name="Kusuda J."/>
            <person name="Takaiwa F."/>
            <person name="Kato A."/>
            <person name="Tohdoh N."/>
            <person name="Shimada H."/>
            <person name="Sugiura M."/>
        </authorList>
    </citation>
    <scope>NUCLEOTIDE SEQUENCE [LARGE SCALE GENOMIC DNA]</scope>
    <source>
        <strain>cv. Bright Yellow 4</strain>
    </source>
</reference>
<protein>
    <recommendedName>
        <fullName evidence="1">NAD(P)H-quinone oxidoreductase subunit H, chloroplastic</fullName>
        <ecNumber evidence="1">7.1.1.-</ecNumber>
    </recommendedName>
    <alternativeName>
        <fullName>NAD(P)H dehydrogenase subunit H</fullName>
    </alternativeName>
    <alternativeName>
        <fullName evidence="1">NADH-plastoquinone oxidoreductase 49 kDa subunit</fullName>
    </alternativeName>
    <alternativeName>
        <fullName evidence="1">NADH-plastoquinone oxidoreductase subunit H</fullName>
    </alternativeName>
</protein>
<sequence length="393" mass="45488">MTAPTTRKDLMIVNMGPQHPSMHGVLRLIVTLDGEDVVDCEPILGYLHRGMEKIAENRTIIQYLPYVTRWDYLATMFTEAITINGPEQLGNIQVPKRASYIRVIMLELSRIASHLLWLGPFMADIGAQTPFFYIFRERELIYDLFEAATGMRMMHNYFRIGGVAADLPYGWIDKCLDFCDYFLTGVAEYQKLITRNPIFLERVEGVGIIGGDEALNWGLSGPMLRASGIEWDLRKVDHYESYDEFDWQVQWQREGDSLARYLVRIGEMTESIKIIQQALEGIPGGPYENLEIRRFDRLKDPEWNDFEYRFISKKPSPTFELSKQELYVRVEAPKGELGIFLIGDQSVFPWRWKIRPPGFINLQILPQLVKRMKLADIMTILGSIDIIMGEVDR</sequence>
<name>NDHH_TOBAC</name>
<feature type="chain" id="PRO_0000118612" description="NAD(P)H-quinone oxidoreductase subunit H, chloroplastic">
    <location>
        <begin position="1"/>
        <end position="393"/>
    </location>
</feature>
<gene>
    <name evidence="1" type="primary">ndhH</name>
</gene>
<keyword id="KW-0150">Chloroplast</keyword>
<keyword id="KW-0472">Membrane</keyword>
<keyword id="KW-0520">NAD</keyword>
<keyword id="KW-0521">NADP</keyword>
<keyword id="KW-0934">Plastid</keyword>
<keyword id="KW-0618">Plastoquinone</keyword>
<keyword id="KW-0874">Quinone</keyword>
<keyword id="KW-1185">Reference proteome</keyword>
<keyword id="KW-0793">Thylakoid</keyword>
<keyword id="KW-1278">Translocase</keyword>
<keyword id="KW-0813">Transport</keyword>
<geneLocation type="chloroplast"/>
<dbReference type="EC" id="7.1.1.-" evidence="1"/>
<dbReference type="EMBL" id="Z00044">
    <property type="protein sequence ID" value="CAA77398.1"/>
    <property type="molecule type" value="Genomic_DNA"/>
</dbReference>
<dbReference type="PIR" id="A05216">
    <property type="entry name" value="A05216"/>
</dbReference>
<dbReference type="RefSeq" id="NP_054563.1">
    <property type="nucleotide sequence ID" value="NC_001879.2"/>
</dbReference>
<dbReference type="SMR" id="P12133"/>
<dbReference type="GeneID" id="800441"/>
<dbReference type="KEGG" id="nta:800441"/>
<dbReference type="OMA" id="TRMDYLT"/>
<dbReference type="OrthoDB" id="1244686at2759"/>
<dbReference type="Proteomes" id="UP000084051">
    <property type="component" value="Unplaced"/>
</dbReference>
<dbReference type="GO" id="GO:0009535">
    <property type="term" value="C:chloroplast thylakoid membrane"/>
    <property type="evidence" value="ECO:0007669"/>
    <property type="project" value="UniProtKB-SubCell"/>
</dbReference>
<dbReference type="GO" id="GO:0051287">
    <property type="term" value="F:NAD binding"/>
    <property type="evidence" value="ECO:0007669"/>
    <property type="project" value="InterPro"/>
</dbReference>
<dbReference type="GO" id="GO:0016655">
    <property type="term" value="F:oxidoreductase activity, acting on NAD(P)H, quinone or similar compound as acceptor"/>
    <property type="evidence" value="ECO:0007669"/>
    <property type="project" value="UniProtKB-UniRule"/>
</dbReference>
<dbReference type="GO" id="GO:0048038">
    <property type="term" value="F:quinone binding"/>
    <property type="evidence" value="ECO:0007669"/>
    <property type="project" value="UniProtKB-KW"/>
</dbReference>
<dbReference type="GO" id="GO:0019684">
    <property type="term" value="P:photosynthesis, light reaction"/>
    <property type="evidence" value="ECO:0007669"/>
    <property type="project" value="UniProtKB-UniRule"/>
</dbReference>
<dbReference type="FunFam" id="1.10.645.10:FF:000003">
    <property type="entry name" value="NAD(P)H-quinone oxidoreductase subunit H, chloroplastic"/>
    <property type="match status" value="1"/>
</dbReference>
<dbReference type="Gene3D" id="1.10.645.10">
    <property type="entry name" value="Cytochrome-c3 Hydrogenase, chain B"/>
    <property type="match status" value="1"/>
</dbReference>
<dbReference type="HAMAP" id="MF_01358">
    <property type="entry name" value="NDH1_NuoD"/>
    <property type="match status" value="1"/>
</dbReference>
<dbReference type="InterPro" id="IPR001135">
    <property type="entry name" value="NADH_Q_OxRdtase_suD"/>
</dbReference>
<dbReference type="InterPro" id="IPR014029">
    <property type="entry name" value="NADH_UbQ_OxRdtase_49kDa_CS"/>
</dbReference>
<dbReference type="InterPro" id="IPR022885">
    <property type="entry name" value="NDH1_su_D/H"/>
</dbReference>
<dbReference type="InterPro" id="IPR029014">
    <property type="entry name" value="NiFe-Hase_large"/>
</dbReference>
<dbReference type="NCBIfam" id="NF004739">
    <property type="entry name" value="PRK06075.1"/>
    <property type="match status" value="1"/>
</dbReference>
<dbReference type="NCBIfam" id="NF005649">
    <property type="entry name" value="PRK07415.1"/>
    <property type="match status" value="1"/>
</dbReference>
<dbReference type="PANTHER" id="PTHR11993:SF10">
    <property type="entry name" value="NADH DEHYDROGENASE [UBIQUINONE] IRON-SULFUR PROTEIN 2, MITOCHONDRIAL"/>
    <property type="match status" value="1"/>
</dbReference>
<dbReference type="PANTHER" id="PTHR11993">
    <property type="entry name" value="NADH-UBIQUINONE OXIDOREDUCTASE 49 KDA SUBUNIT"/>
    <property type="match status" value="1"/>
</dbReference>
<dbReference type="Pfam" id="PF00346">
    <property type="entry name" value="Complex1_49kDa"/>
    <property type="match status" value="1"/>
</dbReference>
<dbReference type="SUPFAM" id="SSF56762">
    <property type="entry name" value="HydB/Nqo4-like"/>
    <property type="match status" value="1"/>
</dbReference>
<dbReference type="PROSITE" id="PS00535">
    <property type="entry name" value="COMPLEX1_49K"/>
    <property type="match status" value="1"/>
</dbReference>
<comment type="function">
    <text evidence="1">NDH shuttles electrons from NAD(P)H:plastoquinone, via FMN and iron-sulfur (Fe-S) centers, to quinones in the photosynthetic chain and possibly in a chloroplast respiratory chain. The immediate electron acceptor for the enzyme in this species is believed to be plastoquinone. Couples the redox reaction to proton translocation, and thus conserves the redox energy in a proton gradient.</text>
</comment>
<comment type="catalytic activity">
    <reaction evidence="1">
        <text>a plastoquinone + NADH + (n+1) H(+)(in) = a plastoquinol + NAD(+) + n H(+)(out)</text>
        <dbReference type="Rhea" id="RHEA:42608"/>
        <dbReference type="Rhea" id="RHEA-COMP:9561"/>
        <dbReference type="Rhea" id="RHEA-COMP:9562"/>
        <dbReference type="ChEBI" id="CHEBI:15378"/>
        <dbReference type="ChEBI" id="CHEBI:17757"/>
        <dbReference type="ChEBI" id="CHEBI:57540"/>
        <dbReference type="ChEBI" id="CHEBI:57945"/>
        <dbReference type="ChEBI" id="CHEBI:62192"/>
    </reaction>
</comment>
<comment type="catalytic activity">
    <reaction evidence="1">
        <text>a plastoquinone + NADPH + (n+1) H(+)(in) = a plastoquinol + NADP(+) + n H(+)(out)</text>
        <dbReference type="Rhea" id="RHEA:42612"/>
        <dbReference type="Rhea" id="RHEA-COMP:9561"/>
        <dbReference type="Rhea" id="RHEA-COMP:9562"/>
        <dbReference type="ChEBI" id="CHEBI:15378"/>
        <dbReference type="ChEBI" id="CHEBI:17757"/>
        <dbReference type="ChEBI" id="CHEBI:57783"/>
        <dbReference type="ChEBI" id="CHEBI:58349"/>
        <dbReference type="ChEBI" id="CHEBI:62192"/>
    </reaction>
</comment>
<comment type="subunit">
    <text evidence="1">NDH is composed of at least 16 different subunits, 5 of which are encoded in the nucleus.</text>
</comment>
<comment type="subcellular location">
    <subcellularLocation>
        <location evidence="1">Plastid</location>
        <location evidence="1">Chloroplast thylakoid membrane</location>
        <topology evidence="1">Peripheral membrane protein</topology>
        <orientation evidence="1">Stromal side</orientation>
    </subcellularLocation>
</comment>
<comment type="similarity">
    <text evidence="1">Belongs to the complex I 49 kDa subunit family.</text>
</comment>
<proteinExistence type="inferred from homology"/>